<feature type="chain" id="PRO_0000137457" description="Translation initiation factor 2 subunit gamma">
    <location>
        <begin position="1"/>
        <end position="410"/>
    </location>
</feature>
<feature type="domain" description="tr-type G" evidence="1">
    <location>
        <begin position="6"/>
        <end position="203"/>
    </location>
</feature>
<feature type="region of interest" description="G1" evidence="1">
    <location>
        <begin position="15"/>
        <end position="22"/>
    </location>
</feature>
<feature type="region of interest" description="G2" evidence="1">
    <location>
        <begin position="43"/>
        <end position="47"/>
    </location>
</feature>
<feature type="region of interest" description="G3" evidence="1">
    <location>
        <begin position="90"/>
        <end position="93"/>
    </location>
</feature>
<feature type="region of interest" description="G4" evidence="1">
    <location>
        <begin position="146"/>
        <end position="149"/>
    </location>
</feature>
<feature type="region of interest" description="G5" evidence="1">
    <location>
        <begin position="181"/>
        <end position="183"/>
    </location>
</feature>
<feature type="binding site" evidence="1">
    <location>
        <begin position="18"/>
        <end position="23"/>
    </location>
    <ligand>
        <name>GTP</name>
        <dbReference type="ChEBI" id="CHEBI:37565"/>
    </ligand>
</feature>
<feature type="binding site" evidence="1">
    <location>
        <position position="18"/>
    </location>
    <ligand>
        <name>Mg(2+)</name>
        <dbReference type="ChEBI" id="CHEBI:18420"/>
        <label>2</label>
    </ligand>
</feature>
<feature type="binding site" evidence="1">
    <location>
        <position position="22"/>
    </location>
    <ligand>
        <name>Mg(2+)</name>
        <dbReference type="ChEBI" id="CHEBI:18420"/>
        <label>1</label>
    </ligand>
</feature>
<feature type="binding site" evidence="1">
    <location>
        <position position="43"/>
    </location>
    <ligand>
        <name>Mg(2+)</name>
        <dbReference type="ChEBI" id="CHEBI:18420"/>
        <label>2</label>
    </ligand>
</feature>
<feature type="binding site" evidence="1">
    <location>
        <position position="45"/>
    </location>
    <ligand>
        <name>Mg(2+)</name>
        <dbReference type="ChEBI" id="CHEBI:18420"/>
        <label>1</label>
    </ligand>
</feature>
<feature type="binding site" evidence="1">
    <location>
        <position position="58"/>
    </location>
    <ligand>
        <name>Zn(2+)</name>
        <dbReference type="ChEBI" id="CHEBI:29105"/>
    </ligand>
</feature>
<feature type="binding site" evidence="1">
    <location>
        <position position="61"/>
    </location>
    <ligand>
        <name>Zn(2+)</name>
        <dbReference type="ChEBI" id="CHEBI:29105"/>
    </ligand>
</feature>
<feature type="binding site" evidence="1">
    <location>
        <position position="73"/>
    </location>
    <ligand>
        <name>Zn(2+)</name>
        <dbReference type="ChEBI" id="CHEBI:29105"/>
    </ligand>
</feature>
<feature type="binding site" evidence="1">
    <location>
        <position position="76"/>
    </location>
    <ligand>
        <name>Zn(2+)</name>
        <dbReference type="ChEBI" id="CHEBI:29105"/>
    </ligand>
</feature>
<feature type="binding site" evidence="1">
    <location>
        <begin position="146"/>
        <end position="149"/>
    </location>
    <ligand>
        <name>GTP</name>
        <dbReference type="ChEBI" id="CHEBI:37565"/>
    </ligand>
</feature>
<feature type="binding site" evidence="1">
    <location>
        <begin position="181"/>
        <end position="183"/>
    </location>
    <ligand>
        <name>GTP</name>
        <dbReference type="ChEBI" id="CHEBI:37565"/>
    </ligand>
</feature>
<accession>Q6LXY6</accession>
<keyword id="KW-0342">GTP-binding</keyword>
<keyword id="KW-0378">Hydrolase</keyword>
<keyword id="KW-0396">Initiation factor</keyword>
<keyword id="KW-0460">Magnesium</keyword>
<keyword id="KW-0479">Metal-binding</keyword>
<keyword id="KW-0547">Nucleotide-binding</keyword>
<keyword id="KW-0648">Protein biosynthesis</keyword>
<keyword id="KW-1185">Reference proteome</keyword>
<keyword id="KW-0862">Zinc</keyword>
<name>IF2G_METMP</name>
<dbReference type="EC" id="3.6.5.3" evidence="1"/>
<dbReference type="EMBL" id="BX950229">
    <property type="protein sequence ID" value="CAF30764.1"/>
    <property type="molecule type" value="Genomic_DNA"/>
</dbReference>
<dbReference type="RefSeq" id="WP_011171152.1">
    <property type="nucleotide sequence ID" value="NC_005791.1"/>
</dbReference>
<dbReference type="SMR" id="Q6LXY6"/>
<dbReference type="STRING" id="267377.MMP1208"/>
<dbReference type="EnsemblBacteria" id="CAF30764">
    <property type="protein sequence ID" value="CAF30764"/>
    <property type="gene ID" value="MMP1208"/>
</dbReference>
<dbReference type="GeneID" id="2761203"/>
<dbReference type="KEGG" id="mmp:MMP1208"/>
<dbReference type="PATRIC" id="fig|267377.15.peg.1241"/>
<dbReference type="eggNOG" id="arCOG01563">
    <property type="taxonomic scope" value="Archaea"/>
</dbReference>
<dbReference type="HOGENOM" id="CLU_027154_0_1_2"/>
<dbReference type="OrthoDB" id="7798at2157"/>
<dbReference type="Proteomes" id="UP000000590">
    <property type="component" value="Chromosome"/>
</dbReference>
<dbReference type="GO" id="GO:0005829">
    <property type="term" value="C:cytosol"/>
    <property type="evidence" value="ECO:0007669"/>
    <property type="project" value="TreeGrafter"/>
</dbReference>
<dbReference type="GO" id="GO:0005525">
    <property type="term" value="F:GTP binding"/>
    <property type="evidence" value="ECO:0007669"/>
    <property type="project" value="UniProtKB-UniRule"/>
</dbReference>
<dbReference type="GO" id="GO:0003924">
    <property type="term" value="F:GTPase activity"/>
    <property type="evidence" value="ECO:0007669"/>
    <property type="project" value="InterPro"/>
</dbReference>
<dbReference type="GO" id="GO:0046872">
    <property type="term" value="F:metal ion binding"/>
    <property type="evidence" value="ECO:0007669"/>
    <property type="project" value="UniProtKB-KW"/>
</dbReference>
<dbReference type="GO" id="GO:0003746">
    <property type="term" value="F:translation elongation factor activity"/>
    <property type="evidence" value="ECO:0007669"/>
    <property type="project" value="UniProtKB-UniRule"/>
</dbReference>
<dbReference type="GO" id="GO:0003743">
    <property type="term" value="F:translation initiation factor activity"/>
    <property type="evidence" value="ECO:0007669"/>
    <property type="project" value="UniProtKB-KW"/>
</dbReference>
<dbReference type="GO" id="GO:0000049">
    <property type="term" value="F:tRNA binding"/>
    <property type="evidence" value="ECO:0007669"/>
    <property type="project" value="InterPro"/>
</dbReference>
<dbReference type="GO" id="GO:0001731">
    <property type="term" value="P:formation of translation preinitiation complex"/>
    <property type="evidence" value="ECO:0007669"/>
    <property type="project" value="TreeGrafter"/>
</dbReference>
<dbReference type="CDD" id="cd01888">
    <property type="entry name" value="eIF2_gamma"/>
    <property type="match status" value="1"/>
</dbReference>
<dbReference type="CDD" id="cd03688">
    <property type="entry name" value="eIF2_gamma_II"/>
    <property type="match status" value="1"/>
</dbReference>
<dbReference type="CDD" id="cd15490">
    <property type="entry name" value="eIF2_gamma_III"/>
    <property type="match status" value="1"/>
</dbReference>
<dbReference type="FunFam" id="2.40.30.10:FF:000009">
    <property type="entry name" value="Eukaryotic translation initiation factor 2 subunit gamma"/>
    <property type="match status" value="1"/>
</dbReference>
<dbReference type="FunFam" id="3.40.50.300:FF:000065">
    <property type="entry name" value="Eukaryotic translation initiation factor 2 subunit gamma"/>
    <property type="match status" value="1"/>
</dbReference>
<dbReference type="FunFam" id="2.40.30.10:FF:000075">
    <property type="entry name" value="Translation initiation factor 2 subunit gamma"/>
    <property type="match status" value="1"/>
</dbReference>
<dbReference type="Gene3D" id="3.40.50.300">
    <property type="entry name" value="P-loop containing nucleotide triphosphate hydrolases"/>
    <property type="match status" value="1"/>
</dbReference>
<dbReference type="Gene3D" id="2.40.30.10">
    <property type="entry name" value="Translation factors"/>
    <property type="match status" value="2"/>
</dbReference>
<dbReference type="HAMAP" id="MF_00119">
    <property type="entry name" value="eIF_2_gamma"/>
    <property type="match status" value="1"/>
</dbReference>
<dbReference type="InterPro" id="IPR050543">
    <property type="entry name" value="eIF2G"/>
</dbReference>
<dbReference type="InterPro" id="IPR015256">
    <property type="entry name" value="eIF2g_C"/>
</dbReference>
<dbReference type="InterPro" id="IPR044127">
    <property type="entry name" value="eIF2g_dom_2"/>
</dbReference>
<dbReference type="InterPro" id="IPR044128">
    <property type="entry name" value="eIF2g_GTP-bd"/>
</dbReference>
<dbReference type="InterPro" id="IPR027417">
    <property type="entry name" value="P-loop_NTPase"/>
</dbReference>
<dbReference type="InterPro" id="IPR005225">
    <property type="entry name" value="Small_GTP-bd"/>
</dbReference>
<dbReference type="InterPro" id="IPR000795">
    <property type="entry name" value="T_Tr_GTP-bd_dom"/>
</dbReference>
<dbReference type="InterPro" id="IPR022424">
    <property type="entry name" value="TIF2_gsu"/>
</dbReference>
<dbReference type="InterPro" id="IPR009000">
    <property type="entry name" value="Transl_B-barrel_sf"/>
</dbReference>
<dbReference type="InterPro" id="IPR009001">
    <property type="entry name" value="Transl_elong_EF1A/Init_IF2_C"/>
</dbReference>
<dbReference type="NCBIfam" id="TIGR03680">
    <property type="entry name" value="eif2g_arch"/>
    <property type="match status" value="1"/>
</dbReference>
<dbReference type="NCBIfam" id="NF003077">
    <property type="entry name" value="PRK04000.1"/>
    <property type="match status" value="1"/>
</dbReference>
<dbReference type="NCBIfam" id="TIGR00231">
    <property type="entry name" value="small_GTP"/>
    <property type="match status" value="1"/>
</dbReference>
<dbReference type="PANTHER" id="PTHR42854">
    <property type="entry name" value="EUKARYOTIC TRANSLATION INITIATION FACTOR 2 SUBUNIT 3 FAMILY MEMBER"/>
    <property type="match status" value="1"/>
</dbReference>
<dbReference type="PANTHER" id="PTHR42854:SF3">
    <property type="entry name" value="EUKARYOTIC TRANSLATION INITIATION FACTOR 2 SUBUNIT 3-RELATED"/>
    <property type="match status" value="1"/>
</dbReference>
<dbReference type="Pfam" id="PF09173">
    <property type="entry name" value="eIF2_C"/>
    <property type="match status" value="1"/>
</dbReference>
<dbReference type="Pfam" id="PF00009">
    <property type="entry name" value="GTP_EFTU"/>
    <property type="match status" value="1"/>
</dbReference>
<dbReference type="PRINTS" id="PR00315">
    <property type="entry name" value="ELONGATNFCT"/>
</dbReference>
<dbReference type="SUPFAM" id="SSF50465">
    <property type="entry name" value="EF-Tu/eEF-1alpha/eIF2-gamma C-terminal domain"/>
    <property type="match status" value="1"/>
</dbReference>
<dbReference type="SUPFAM" id="SSF52540">
    <property type="entry name" value="P-loop containing nucleoside triphosphate hydrolases"/>
    <property type="match status" value="1"/>
</dbReference>
<dbReference type="SUPFAM" id="SSF50447">
    <property type="entry name" value="Translation proteins"/>
    <property type="match status" value="1"/>
</dbReference>
<dbReference type="PROSITE" id="PS51722">
    <property type="entry name" value="G_TR_2"/>
    <property type="match status" value="1"/>
</dbReference>
<evidence type="ECO:0000255" key="1">
    <source>
        <dbReference type="HAMAP-Rule" id="MF_00119"/>
    </source>
</evidence>
<reference key="1">
    <citation type="journal article" date="2004" name="J. Bacteriol.">
        <title>Complete genome sequence of the genetically tractable hydrogenotrophic methanogen Methanococcus maripaludis.</title>
        <authorList>
            <person name="Hendrickson E.L."/>
            <person name="Kaul R."/>
            <person name="Zhou Y."/>
            <person name="Bovee D."/>
            <person name="Chapman P."/>
            <person name="Chung J."/>
            <person name="Conway de Macario E."/>
            <person name="Dodsworth J.A."/>
            <person name="Gillett W."/>
            <person name="Graham D.E."/>
            <person name="Hackett M."/>
            <person name="Haydock A.K."/>
            <person name="Kang A."/>
            <person name="Land M.L."/>
            <person name="Levy R."/>
            <person name="Lie T.J."/>
            <person name="Major T.A."/>
            <person name="Moore B.C."/>
            <person name="Porat I."/>
            <person name="Palmeiri A."/>
            <person name="Rouse G."/>
            <person name="Saenphimmachak C."/>
            <person name="Soell D."/>
            <person name="Van Dien S."/>
            <person name="Wang T."/>
            <person name="Whitman W.B."/>
            <person name="Xia Q."/>
            <person name="Zhang Y."/>
            <person name="Larimer F.W."/>
            <person name="Olson M.V."/>
            <person name="Leigh J.A."/>
        </authorList>
    </citation>
    <scope>NUCLEOTIDE SEQUENCE [LARGE SCALE GENOMIC DNA]</scope>
    <source>
        <strain>DSM 14266 / JCM 13030 / NBRC 101832 / S2 / LL</strain>
    </source>
</reference>
<proteinExistence type="inferred from homology"/>
<gene>
    <name evidence="1" type="primary">eif2g</name>
    <name type="ordered locus">MMP1208</name>
</gene>
<organism>
    <name type="scientific">Methanococcus maripaludis (strain DSM 14266 / JCM 13030 / NBRC 101832 / S2 / LL)</name>
    <dbReference type="NCBI Taxonomy" id="267377"/>
    <lineage>
        <taxon>Archaea</taxon>
        <taxon>Methanobacteriati</taxon>
        <taxon>Methanobacteriota</taxon>
        <taxon>Methanomada group</taxon>
        <taxon>Methanococci</taxon>
        <taxon>Methanococcales</taxon>
        <taxon>Methanococcaceae</taxon>
        <taxon>Methanococcus</taxon>
    </lineage>
</organism>
<comment type="function">
    <text evidence="1">eIF-2 functions in the early steps of protein synthesis by forming a ternary complex with GTP and initiator tRNA.</text>
</comment>
<comment type="catalytic activity">
    <reaction evidence="1">
        <text>GTP + H2O = GDP + phosphate + H(+)</text>
        <dbReference type="Rhea" id="RHEA:19669"/>
        <dbReference type="ChEBI" id="CHEBI:15377"/>
        <dbReference type="ChEBI" id="CHEBI:15378"/>
        <dbReference type="ChEBI" id="CHEBI:37565"/>
        <dbReference type="ChEBI" id="CHEBI:43474"/>
        <dbReference type="ChEBI" id="CHEBI:58189"/>
        <dbReference type="EC" id="3.6.5.3"/>
    </reaction>
</comment>
<comment type="cofactor">
    <cofactor evidence="1">
        <name>Mg(2+)</name>
        <dbReference type="ChEBI" id="CHEBI:18420"/>
    </cofactor>
</comment>
<comment type="subunit">
    <text evidence="1">Heterotrimer composed of an alpha, a beta and a gamma chain.</text>
</comment>
<comment type="similarity">
    <text evidence="1">Belongs to the TRAFAC class translation factor GTPase superfamily. Classic translation factor GTPase family. EIF2G subfamily.</text>
</comment>
<sequence length="410" mass="43943">MAASNQSEVNIGMVGHVDHGKTSLTRKLTGVWTDTHSEELKRGISIRLGYADCEIKKCETCDEPECYTVGKKCDSCGGKLQTLRKISFVDAPGHETLMATMLSGASLMDGAILVIAASEECPQPQTKEHLMALDALGVEKIIIVQNKIDLVSEEAAVENYNQIKEFTKGTVAENAPIIPVSAHHGANLDVLLKAIQDFIPTPERDETVSPKLYVARSFDVNKPGSEIKDLKGGVIGGSIIQGALKVGDELEIKPGIKVTEGNKTHWVPIITKIISLGVGSKKLKTAYPGGLIGVGTELDPNLTKSDALSGSLAGIPGTLPETLEKMEIEPQLLERVVGSQDELVIEPLKTNEVLMLNVGTSTTVGVTVSARPDRAEIKLKLPVCADKGDRVAISRKIGSRWRLIGYGIIL</sequence>
<protein>
    <recommendedName>
        <fullName evidence="1">Translation initiation factor 2 subunit gamma</fullName>
        <ecNumber evidence="1">3.6.5.3</ecNumber>
    </recommendedName>
    <alternativeName>
        <fullName evidence="1">aIF2-gamma</fullName>
    </alternativeName>
    <alternativeName>
        <fullName evidence="1">eIF-2-gamma</fullName>
    </alternativeName>
</protein>